<proteinExistence type="evidence at transcript level"/>
<reference key="1">
    <citation type="journal article" date="2005" name="BMC Biol.">
        <title>The sequence of rice chromosomes 11 and 12, rich in disease resistance genes and recent gene duplications.</title>
        <authorList>
            <consortium name="The rice chromosomes 11 and 12 sequencing consortia"/>
        </authorList>
    </citation>
    <scope>NUCLEOTIDE SEQUENCE [LARGE SCALE GENOMIC DNA]</scope>
    <source>
        <strain>cv. Nipponbare</strain>
    </source>
</reference>
<reference key="2">
    <citation type="journal article" date="2005" name="Nature">
        <title>The map-based sequence of the rice genome.</title>
        <authorList>
            <consortium name="International rice genome sequencing project (IRGSP)"/>
        </authorList>
    </citation>
    <scope>NUCLEOTIDE SEQUENCE [LARGE SCALE GENOMIC DNA]</scope>
    <source>
        <strain>cv. Nipponbare</strain>
    </source>
</reference>
<reference key="3">
    <citation type="journal article" date="2008" name="Nucleic Acids Res.">
        <title>The rice annotation project database (RAP-DB): 2008 update.</title>
        <authorList>
            <consortium name="The rice annotation project (RAP)"/>
        </authorList>
    </citation>
    <scope>GENOME REANNOTATION</scope>
    <source>
        <strain>cv. Nipponbare</strain>
    </source>
</reference>
<reference key="4">
    <citation type="journal article" date="2013" name="Rice">
        <title>Improvement of the Oryza sativa Nipponbare reference genome using next generation sequence and optical map data.</title>
        <authorList>
            <person name="Kawahara Y."/>
            <person name="de la Bastide M."/>
            <person name="Hamilton J.P."/>
            <person name="Kanamori H."/>
            <person name="McCombie W.R."/>
            <person name="Ouyang S."/>
            <person name="Schwartz D.C."/>
            <person name="Tanaka T."/>
            <person name="Wu J."/>
            <person name="Zhou S."/>
            <person name="Childs K.L."/>
            <person name="Davidson R.M."/>
            <person name="Lin H."/>
            <person name="Quesada-Ocampo L."/>
            <person name="Vaillancourt B."/>
            <person name="Sakai H."/>
            <person name="Lee S.S."/>
            <person name="Kim J."/>
            <person name="Numa H."/>
            <person name="Itoh T."/>
            <person name="Buell C.R."/>
            <person name="Matsumoto T."/>
        </authorList>
    </citation>
    <scope>GENOME REANNOTATION</scope>
    <source>
        <strain>cv. Nipponbare</strain>
    </source>
</reference>
<reference key="5">
    <citation type="journal article" date="2010" name="Plant Sci.">
        <title>Identification and expression analysis of PIN genes in rice.</title>
        <authorList>
            <person name="Miyashita Y."/>
            <person name="Takasugi T."/>
            <person name="Ito Y."/>
        </authorList>
    </citation>
    <scope>IDENTIFICATION</scope>
    <scope>TISSUE SPECIFICITY</scope>
</reference>
<reference key="6">
    <citation type="journal article" date="2009" name="Mol. Plant">
        <title>Expression of PIN genes in rice (Oryza sativa L.): tissue specificity and regulation by hormones.</title>
        <authorList>
            <person name="Wang J.R."/>
            <person name="Hu H."/>
            <person name="Wang G.H."/>
            <person name="Li J."/>
            <person name="Chen J.Y."/>
            <person name="Wu P."/>
        </authorList>
    </citation>
    <scope>TISSUE SPECIFICITY</scope>
</reference>
<feature type="chain" id="PRO_0000437476" description="Probable auxin efflux carrier component 1d">
    <location>
        <begin position="1"/>
        <end position="558"/>
    </location>
</feature>
<feature type="topological domain" description="Extracellular" evidence="7">
    <location>
        <begin position="1"/>
        <end position="6"/>
    </location>
</feature>
<feature type="transmembrane region" description="Helical; Name=1" evidence="3">
    <location>
        <begin position="7"/>
        <end position="27"/>
    </location>
</feature>
<feature type="topological domain" description="Cytoplasmic" evidence="7">
    <location>
        <begin position="28"/>
        <end position="38"/>
    </location>
</feature>
<feature type="transmembrane region" description="Helical; Name=2" evidence="3">
    <location>
        <begin position="39"/>
        <end position="59"/>
    </location>
</feature>
<feature type="topological domain" description="Extracellular" evidence="7">
    <location>
        <begin position="60"/>
        <end position="68"/>
    </location>
</feature>
<feature type="transmembrane region" description="Helical; Name=3" evidence="3">
    <location>
        <begin position="69"/>
        <end position="89"/>
    </location>
</feature>
<feature type="topological domain" description="Cytoplasmic" evidence="7">
    <location>
        <begin position="90"/>
        <end position="100"/>
    </location>
</feature>
<feature type="transmembrane region" description="Helical; Name=4" evidence="3">
    <location>
        <begin position="101"/>
        <end position="121"/>
    </location>
</feature>
<feature type="topological domain" description="Extracellular" evidence="7">
    <location>
        <begin position="122"/>
        <end position="138"/>
    </location>
</feature>
<feature type="transmembrane region" description="Helical; Name=5" evidence="3">
    <location>
        <begin position="139"/>
        <end position="159"/>
    </location>
</feature>
<feature type="topological domain" description="Cytoplasmic" evidence="7">
    <location>
        <begin position="160"/>
        <end position="418"/>
    </location>
</feature>
<feature type="transmembrane region" description="Helical; Name=6" evidence="3">
    <location>
        <begin position="419"/>
        <end position="439"/>
    </location>
</feature>
<feature type="topological domain" description="Extracellular" evidence="7">
    <location>
        <begin position="440"/>
        <end position="442"/>
    </location>
</feature>
<feature type="transmembrane region" description="Helical; Name=7" evidence="3">
    <location>
        <begin position="443"/>
        <end position="463"/>
    </location>
</feature>
<feature type="topological domain" description="Cytoplasmic" evidence="7">
    <location>
        <begin position="464"/>
        <end position="479"/>
    </location>
</feature>
<feature type="transmembrane region" description="Helical; Name=8" evidence="3">
    <location>
        <begin position="480"/>
        <end position="500"/>
    </location>
</feature>
<feature type="topological domain" description="Extracellular" evidence="7">
    <location>
        <begin position="501"/>
        <end position="502"/>
    </location>
</feature>
<feature type="transmembrane region" description="Helical; Name=9" evidence="3">
    <location>
        <begin position="503"/>
        <end position="523"/>
    </location>
</feature>
<feature type="topological domain" description="Cytoplasmic" evidence="7">
    <location>
        <begin position="524"/>
        <end position="537"/>
    </location>
</feature>
<feature type="transmembrane region" description="Helical; Name=10" evidence="3">
    <location>
        <begin position="538"/>
        <end position="558"/>
    </location>
</feature>
<feature type="region of interest" description="Disordered" evidence="4">
    <location>
        <begin position="214"/>
        <end position="243"/>
    </location>
</feature>
<feature type="region of interest" description="Disordered" evidence="4">
    <location>
        <begin position="277"/>
        <end position="298"/>
    </location>
</feature>
<feature type="region of interest" description="Disordered" evidence="4">
    <location>
        <begin position="356"/>
        <end position="390"/>
    </location>
</feature>
<feature type="compositionally biased region" description="Polar residues" evidence="4">
    <location>
        <begin position="231"/>
        <end position="243"/>
    </location>
</feature>
<feature type="binding site" evidence="2">
    <location>
        <position position="51"/>
    </location>
    <ligand>
        <name>(indol-3-yl)acetate</name>
        <dbReference type="ChEBI" id="CHEBI:30854"/>
    </ligand>
</feature>
<feature type="binding site" evidence="2">
    <location>
        <position position="112"/>
    </location>
    <ligand>
        <name>(indol-3-yl)acetate</name>
        <dbReference type="ChEBI" id="CHEBI:30854"/>
    </ligand>
</feature>
<feature type="binding site" evidence="2">
    <location>
        <position position="114"/>
    </location>
    <ligand>
        <name>(indol-3-yl)acetate</name>
        <dbReference type="ChEBI" id="CHEBI:30854"/>
    </ligand>
</feature>
<feature type="binding site" evidence="2">
    <location>
        <position position="152"/>
    </location>
    <ligand>
        <name>(indol-3-yl)acetate</name>
        <dbReference type="ChEBI" id="CHEBI:30854"/>
    </ligand>
</feature>
<feature type="binding site" evidence="2">
    <location>
        <position position="518"/>
    </location>
    <ligand>
        <name>(indol-3-yl)acetate</name>
        <dbReference type="ChEBI" id="CHEBI:30854"/>
    </ligand>
</feature>
<feature type="binding site" evidence="2">
    <location>
        <position position="519"/>
    </location>
    <ligand>
        <name>(indol-3-yl)acetate</name>
        <dbReference type="ChEBI" id="CHEBI:30854"/>
    </ligand>
</feature>
<accession>Q0IQA5</accession>
<accession>D5A7I8</accession>
<accession>Q2QY34</accession>
<keyword id="KW-0927">Auxin signaling pathway</keyword>
<keyword id="KW-0472">Membrane</keyword>
<keyword id="KW-1185">Reference proteome</keyword>
<keyword id="KW-0812">Transmembrane</keyword>
<keyword id="KW-1133">Transmembrane helix</keyword>
<keyword id="KW-0813">Transport</keyword>
<dbReference type="EMBL" id="DP000011">
    <property type="protein sequence ID" value="ABA95736.2"/>
    <property type="status" value="ALT_INIT"/>
    <property type="molecule type" value="Genomic_DNA"/>
</dbReference>
<dbReference type="EMBL" id="AP008218">
    <property type="protein sequence ID" value="BAF29110.1"/>
    <property type="status" value="ALT_INIT"/>
    <property type="molecule type" value="Genomic_DNA"/>
</dbReference>
<dbReference type="EMBL" id="AP014968">
    <property type="protein sequence ID" value="BAT15775.1"/>
    <property type="status" value="ALT_INIT"/>
    <property type="molecule type" value="Genomic_DNA"/>
</dbReference>
<dbReference type="EMBL" id="BR000830">
    <property type="protein sequence ID" value="FAA00679.1"/>
    <property type="molecule type" value="Genomic_DNA"/>
</dbReference>
<dbReference type="SMR" id="Q0IQA5"/>
<dbReference type="FunCoup" id="Q0IQA5">
    <property type="interactions" value="12"/>
</dbReference>
<dbReference type="STRING" id="39947.Q0IQA5"/>
<dbReference type="GlyCosmos" id="Q0IQA5">
    <property type="glycosylation" value="2 sites, No reported glycans"/>
</dbReference>
<dbReference type="PaxDb" id="39947-Q0IQA5"/>
<dbReference type="EnsemblPlants" id="Os12t0133800-01">
    <property type="protein sequence ID" value="Os12t0133800-01"/>
    <property type="gene ID" value="Os12g0133800"/>
</dbReference>
<dbReference type="Gramene" id="Os12t0133800-01">
    <property type="protein sequence ID" value="Os12t0133800-01"/>
    <property type="gene ID" value="Os12g0133800"/>
</dbReference>
<dbReference type="KEGG" id="dosa:Os12g0133800"/>
<dbReference type="KEGG" id="osa:4351432"/>
<dbReference type="HOGENOM" id="CLU_019285_1_1_1"/>
<dbReference type="InParanoid" id="Q0IQA5"/>
<dbReference type="OrthoDB" id="1868374at2759"/>
<dbReference type="PlantReactome" id="R-OSA-5608118">
    <property type="pathway name" value="Auxin signalling"/>
</dbReference>
<dbReference type="PlantReactome" id="R-OSA-8858053">
    <property type="pathway name" value="Polar auxin transport"/>
</dbReference>
<dbReference type="PlantReactome" id="R-OSA-9639861">
    <property type="pathway name" value="Development of root hair"/>
</dbReference>
<dbReference type="Proteomes" id="UP000000763">
    <property type="component" value="Chromosome 12"/>
</dbReference>
<dbReference type="Proteomes" id="UP000059680">
    <property type="component" value="Chromosome 12"/>
</dbReference>
<dbReference type="GO" id="GO:0071944">
    <property type="term" value="C:cell periphery"/>
    <property type="evidence" value="ECO:0000250"/>
    <property type="project" value="UniProtKB"/>
</dbReference>
<dbReference type="GO" id="GO:0005783">
    <property type="term" value="C:endoplasmic reticulum"/>
    <property type="evidence" value="ECO:0000318"/>
    <property type="project" value="GO_Central"/>
</dbReference>
<dbReference type="GO" id="GO:0005886">
    <property type="term" value="C:plasma membrane"/>
    <property type="evidence" value="ECO:0000250"/>
    <property type="project" value="UniProtKB"/>
</dbReference>
<dbReference type="GO" id="GO:0010329">
    <property type="term" value="F:auxin efflux transmembrane transporter activity"/>
    <property type="evidence" value="ECO:0000250"/>
    <property type="project" value="UniProtKB"/>
</dbReference>
<dbReference type="GO" id="GO:0042802">
    <property type="term" value="F:identical protein binding"/>
    <property type="evidence" value="ECO:0000250"/>
    <property type="project" value="UniProtKB"/>
</dbReference>
<dbReference type="GO" id="GO:0042803">
    <property type="term" value="F:protein homodimerization activity"/>
    <property type="evidence" value="ECO:0000250"/>
    <property type="project" value="UniProtKB"/>
</dbReference>
<dbReference type="GO" id="GO:0010315">
    <property type="term" value="P:auxin export across the plasma membrane"/>
    <property type="evidence" value="ECO:0000250"/>
    <property type="project" value="UniProtKB"/>
</dbReference>
<dbReference type="GO" id="GO:0009926">
    <property type="term" value="P:auxin polar transport"/>
    <property type="evidence" value="ECO:0000318"/>
    <property type="project" value="GO_Central"/>
</dbReference>
<dbReference type="GO" id="GO:0009734">
    <property type="term" value="P:auxin-activated signaling pathway"/>
    <property type="evidence" value="ECO:0007669"/>
    <property type="project" value="UniProtKB-KW"/>
</dbReference>
<dbReference type="InterPro" id="IPR014024">
    <property type="entry name" value="Auxin_eff_plant"/>
</dbReference>
<dbReference type="InterPro" id="IPR051107">
    <property type="entry name" value="Auxin_Efflux_Carrier"/>
</dbReference>
<dbReference type="InterPro" id="IPR004776">
    <property type="entry name" value="Mem_transp_PIN-like"/>
</dbReference>
<dbReference type="NCBIfam" id="TIGR00946">
    <property type="entry name" value="2a69"/>
    <property type="match status" value="1"/>
</dbReference>
<dbReference type="PANTHER" id="PTHR31752">
    <property type="entry name" value="AUXIN EFFLUX CARRIER COMPONENT 1B-RELATED"/>
    <property type="match status" value="1"/>
</dbReference>
<dbReference type="PANTHER" id="PTHR31752:SF66">
    <property type="entry name" value="AUXIN EFFLUX CARRIER COMPONENT 1B-RELATED"/>
    <property type="match status" value="1"/>
</dbReference>
<dbReference type="Pfam" id="PF03547">
    <property type="entry name" value="Mem_trans"/>
    <property type="match status" value="1"/>
</dbReference>
<comment type="function">
    <text evidence="7">May act as a component of the auxin efflux carrier.</text>
</comment>
<comment type="subunit">
    <text evidence="1">Homodimer.</text>
</comment>
<comment type="subcellular location">
    <subcellularLocation>
        <location evidence="3">Membrane</location>
        <topology evidence="3">Multi-pass membrane protein</topology>
    </subcellularLocation>
</comment>
<comment type="tissue specificity">
    <text evidence="5">Expressed in roots and shoot apex.</text>
</comment>
<comment type="similarity">
    <text evidence="7">Belongs to the auxin efflux carrier (TC 2.A.69.1) family.</text>
</comment>
<comment type="sequence caution" evidence="7">
    <conflict type="erroneous initiation">
        <sequence resource="EMBL-CDS" id="ABA95736"/>
    </conflict>
    <text>Truncated N-terminus.</text>
</comment>
<comment type="sequence caution" evidence="7">
    <conflict type="erroneous initiation">
        <sequence resource="EMBL-CDS" id="BAF29110"/>
    </conflict>
    <text>Truncated N-terminus.</text>
</comment>
<comment type="sequence caution" evidence="7">
    <conflict type="erroneous initiation">
        <sequence resource="EMBL-CDS" id="BAT15775"/>
    </conflict>
    <text>Truncated N-terminus.</text>
</comment>
<protein>
    <recommendedName>
        <fullName evidence="7">Probable auxin efflux carrier component 1d</fullName>
        <shortName evidence="6">OsPIN1d</shortName>
    </recommendedName>
</protein>
<sequence>MITVVDLYHVLTAVVPLYVAMTLAYASVRWWRIFSPDQCSGINRFVALFAVPLLSFHFISTNNPFAMNLRFLAADTLQKLIVLALLALWCRLSARGSLDWLITLFSLSTLPNTLVMGIPLLKGMYAAAGAAAGADSGSLMVQIVVLQCIIWYTLMLFLFEYRGARLLVMEQFPDTAASIVSFRVDSDVVSLAGGGGGAAELQAEAEVGDDGKMRVTVRKSTSSRSEAACSHGTQSHSQSMQPRVSNLSGVEIYSLQSSRNPTPRGSSFNHAEFFNIVGNGKHGDEEKGAAGGGGHSPQPVVGKRKDLHMFVWSSSASPVSERAAAAAAAGAVHVFGGGGADHGDAKGAQAYDEYSFGNKNEKDGPTLSKLGSNSTAQLRPKDDGEGRAAAMPPASVMTRLILIMVWRKLIRNPNTYSSLLGVIWSLVSYRWGIEMPAIIARSISILSDAGLGMAMFSLGLFMALQPRIIACGNSLASYAMAVRFLVGPAVMAAASIAVGLRGVLLHIAIVQAALPQGIVPFVFAKEYNVHPNILSTAVIFGMLIALPITLVYYILLGL</sequence>
<evidence type="ECO:0000250" key="1">
    <source>
        <dbReference type="UniProtKB" id="Q9C6B8"/>
    </source>
</evidence>
<evidence type="ECO:0000250" key="2">
    <source>
        <dbReference type="UniProtKB" id="Q9LFP6"/>
    </source>
</evidence>
<evidence type="ECO:0000255" key="3"/>
<evidence type="ECO:0000256" key="4">
    <source>
        <dbReference type="SAM" id="MobiDB-lite"/>
    </source>
</evidence>
<evidence type="ECO:0000269" key="5">
    <source ref="5"/>
</evidence>
<evidence type="ECO:0000303" key="6">
    <source ref="5"/>
</evidence>
<evidence type="ECO:0000305" key="7"/>
<evidence type="ECO:0000312" key="8">
    <source>
        <dbReference type="EMBL" id="ABA95736.2"/>
    </source>
</evidence>
<evidence type="ECO:0000312" key="9">
    <source>
        <dbReference type="EMBL" id="BAT15775.1"/>
    </source>
</evidence>
<organism>
    <name type="scientific">Oryza sativa subsp. japonica</name>
    <name type="common">Rice</name>
    <dbReference type="NCBI Taxonomy" id="39947"/>
    <lineage>
        <taxon>Eukaryota</taxon>
        <taxon>Viridiplantae</taxon>
        <taxon>Streptophyta</taxon>
        <taxon>Embryophyta</taxon>
        <taxon>Tracheophyta</taxon>
        <taxon>Spermatophyta</taxon>
        <taxon>Magnoliopsida</taxon>
        <taxon>Liliopsida</taxon>
        <taxon>Poales</taxon>
        <taxon>Poaceae</taxon>
        <taxon>BOP clade</taxon>
        <taxon>Oryzoideae</taxon>
        <taxon>Oryzeae</taxon>
        <taxon>Oryzinae</taxon>
        <taxon>Oryza</taxon>
        <taxon>Oryza sativa</taxon>
    </lineage>
</organism>
<name>PIN1D_ORYSJ</name>
<gene>
    <name evidence="6" type="primary">PIN1D</name>
    <name evidence="9" type="ordered locus">Os12g0133800</name>
    <name evidence="8" type="ordered locus">LOC_Os12g04000</name>
</gene>